<sequence>MSTARLKINLDALAINWRNLDAKTNCETAAVVKANGYGLESGRVGKALAQAGARNFFVAIAEEGIALRRALGPGPGISVFAGHMEGDAKLLRDFQLTPMLNSLDQMLRHFESLPGHPFGVQLDSGMNRLGMEAAEWMAVRDIALDQNPVLLMSHLACSDEPGHGMNAYQLKNFIEMTEGLNIPRSLAATGGLLLGRDYHFDLCRPGIGLYGGAPYADALPVVELEVPVIQVRDLAPGESVGYGNTWIAQRDSKIATIAGGYADGLHRAFQRQGIMAYAGGTPCPVVGRISMDLITVDVTDLAEVPPYLSLMNETQTVDVLANAADTIGYEVLTSLGNRYARTYSA</sequence>
<name>ALR_RUEST</name>
<gene>
    <name type="primary">alr</name>
    <name type="ordered locus">TM1040_1779</name>
</gene>
<protein>
    <recommendedName>
        <fullName evidence="1">Alanine racemase</fullName>
        <ecNumber evidence="1">5.1.1.1</ecNumber>
    </recommendedName>
</protein>
<dbReference type="EC" id="5.1.1.1" evidence="1"/>
<dbReference type="EMBL" id="CP000377">
    <property type="protein sequence ID" value="ABF64512.1"/>
    <property type="molecule type" value="Genomic_DNA"/>
</dbReference>
<dbReference type="RefSeq" id="WP_011539107.1">
    <property type="nucleotide sequence ID" value="NC_008044.1"/>
</dbReference>
<dbReference type="SMR" id="Q1GFQ4"/>
<dbReference type="STRING" id="292414.TM1040_1779"/>
<dbReference type="KEGG" id="sit:TM1040_1779"/>
<dbReference type="eggNOG" id="COG0787">
    <property type="taxonomic scope" value="Bacteria"/>
</dbReference>
<dbReference type="HOGENOM" id="CLU_028393_1_1_5"/>
<dbReference type="OrthoDB" id="9813814at2"/>
<dbReference type="UniPathway" id="UPA00042">
    <property type="reaction ID" value="UER00497"/>
</dbReference>
<dbReference type="Proteomes" id="UP000000636">
    <property type="component" value="Chromosome"/>
</dbReference>
<dbReference type="GO" id="GO:0005829">
    <property type="term" value="C:cytosol"/>
    <property type="evidence" value="ECO:0007669"/>
    <property type="project" value="TreeGrafter"/>
</dbReference>
<dbReference type="GO" id="GO:0008784">
    <property type="term" value="F:alanine racemase activity"/>
    <property type="evidence" value="ECO:0007669"/>
    <property type="project" value="UniProtKB-UniRule"/>
</dbReference>
<dbReference type="GO" id="GO:0030170">
    <property type="term" value="F:pyridoxal phosphate binding"/>
    <property type="evidence" value="ECO:0007669"/>
    <property type="project" value="UniProtKB-UniRule"/>
</dbReference>
<dbReference type="GO" id="GO:0030632">
    <property type="term" value="P:D-alanine biosynthetic process"/>
    <property type="evidence" value="ECO:0007669"/>
    <property type="project" value="UniProtKB-UniRule"/>
</dbReference>
<dbReference type="CDD" id="cd00430">
    <property type="entry name" value="PLPDE_III_AR"/>
    <property type="match status" value="1"/>
</dbReference>
<dbReference type="Gene3D" id="3.20.20.10">
    <property type="entry name" value="Alanine racemase"/>
    <property type="match status" value="1"/>
</dbReference>
<dbReference type="Gene3D" id="2.40.37.10">
    <property type="entry name" value="Lyase, Ornithine Decarboxylase, Chain A, domain 1"/>
    <property type="match status" value="1"/>
</dbReference>
<dbReference type="HAMAP" id="MF_01201">
    <property type="entry name" value="Ala_racemase"/>
    <property type="match status" value="1"/>
</dbReference>
<dbReference type="InterPro" id="IPR000821">
    <property type="entry name" value="Ala_racemase"/>
</dbReference>
<dbReference type="InterPro" id="IPR009006">
    <property type="entry name" value="Ala_racemase/Decarboxylase_C"/>
</dbReference>
<dbReference type="InterPro" id="IPR011079">
    <property type="entry name" value="Ala_racemase_C"/>
</dbReference>
<dbReference type="InterPro" id="IPR001608">
    <property type="entry name" value="Ala_racemase_N"/>
</dbReference>
<dbReference type="InterPro" id="IPR029066">
    <property type="entry name" value="PLP-binding_barrel"/>
</dbReference>
<dbReference type="NCBIfam" id="TIGR00492">
    <property type="entry name" value="alr"/>
    <property type="match status" value="1"/>
</dbReference>
<dbReference type="PANTHER" id="PTHR30511">
    <property type="entry name" value="ALANINE RACEMASE"/>
    <property type="match status" value="1"/>
</dbReference>
<dbReference type="PANTHER" id="PTHR30511:SF0">
    <property type="entry name" value="ALANINE RACEMASE, CATABOLIC-RELATED"/>
    <property type="match status" value="1"/>
</dbReference>
<dbReference type="Pfam" id="PF00842">
    <property type="entry name" value="Ala_racemase_C"/>
    <property type="match status" value="1"/>
</dbReference>
<dbReference type="Pfam" id="PF01168">
    <property type="entry name" value="Ala_racemase_N"/>
    <property type="match status" value="1"/>
</dbReference>
<dbReference type="PRINTS" id="PR00992">
    <property type="entry name" value="ALARACEMASE"/>
</dbReference>
<dbReference type="SMART" id="SM01005">
    <property type="entry name" value="Ala_racemase_C"/>
    <property type="match status" value="1"/>
</dbReference>
<dbReference type="SUPFAM" id="SSF50621">
    <property type="entry name" value="Alanine racemase C-terminal domain-like"/>
    <property type="match status" value="1"/>
</dbReference>
<dbReference type="SUPFAM" id="SSF51419">
    <property type="entry name" value="PLP-binding barrel"/>
    <property type="match status" value="1"/>
</dbReference>
<comment type="function">
    <text evidence="1">Catalyzes the interconversion of L-alanine and D-alanine. May also act on other amino acids.</text>
</comment>
<comment type="catalytic activity">
    <reaction evidence="1">
        <text>L-alanine = D-alanine</text>
        <dbReference type="Rhea" id="RHEA:20249"/>
        <dbReference type="ChEBI" id="CHEBI:57416"/>
        <dbReference type="ChEBI" id="CHEBI:57972"/>
        <dbReference type="EC" id="5.1.1.1"/>
    </reaction>
</comment>
<comment type="cofactor">
    <cofactor evidence="1">
        <name>pyridoxal 5'-phosphate</name>
        <dbReference type="ChEBI" id="CHEBI:597326"/>
    </cofactor>
</comment>
<comment type="pathway">
    <text evidence="1">Amino-acid biosynthesis; D-alanine biosynthesis; D-alanine from L-alanine: step 1/1.</text>
</comment>
<comment type="similarity">
    <text evidence="1">Belongs to the alanine racemase family.</text>
</comment>
<reference key="1">
    <citation type="submission" date="2006-05" db="EMBL/GenBank/DDBJ databases">
        <title>Complete sequence of chromosome of Silicibacter sp. TM1040.</title>
        <authorList>
            <consortium name="US DOE Joint Genome Institute"/>
            <person name="Copeland A."/>
            <person name="Lucas S."/>
            <person name="Lapidus A."/>
            <person name="Barry K."/>
            <person name="Detter J.C."/>
            <person name="Glavina del Rio T."/>
            <person name="Hammon N."/>
            <person name="Israni S."/>
            <person name="Dalin E."/>
            <person name="Tice H."/>
            <person name="Pitluck S."/>
            <person name="Brettin T."/>
            <person name="Bruce D."/>
            <person name="Han C."/>
            <person name="Tapia R."/>
            <person name="Goodwin L."/>
            <person name="Thompson L.S."/>
            <person name="Gilna P."/>
            <person name="Schmutz J."/>
            <person name="Larimer F."/>
            <person name="Land M."/>
            <person name="Hauser L."/>
            <person name="Kyrpides N."/>
            <person name="Kim E."/>
            <person name="Belas R."/>
            <person name="Moran M.A."/>
            <person name="Buchan A."/>
            <person name="Gonzalez J.M."/>
            <person name="Schell M.A."/>
            <person name="Sun F."/>
            <person name="Richardson P."/>
        </authorList>
    </citation>
    <scope>NUCLEOTIDE SEQUENCE [LARGE SCALE GENOMIC DNA]</scope>
    <source>
        <strain>TM1040</strain>
    </source>
</reference>
<feature type="chain" id="PRO_1000138622" description="Alanine racemase">
    <location>
        <begin position="1"/>
        <end position="345"/>
    </location>
</feature>
<feature type="active site" description="Proton acceptor; specific for D-alanine" evidence="1">
    <location>
        <position position="33"/>
    </location>
</feature>
<feature type="active site" description="Proton acceptor; specific for L-alanine" evidence="1">
    <location>
        <position position="242"/>
    </location>
</feature>
<feature type="binding site" evidence="1">
    <location>
        <position position="128"/>
    </location>
    <ligand>
        <name>substrate</name>
    </ligand>
</feature>
<feature type="binding site" evidence="1">
    <location>
        <position position="291"/>
    </location>
    <ligand>
        <name>substrate</name>
    </ligand>
</feature>
<feature type="modified residue" description="N6-(pyridoxal phosphate)lysine" evidence="1">
    <location>
        <position position="33"/>
    </location>
</feature>
<evidence type="ECO:0000255" key="1">
    <source>
        <dbReference type="HAMAP-Rule" id="MF_01201"/>
    </source>
</evidence>
<organism>
    <name type="scientific">Ruegeria sp. (strain TM1040)</name>
    <name type="common">Silicibacter sp.</name>
    <dbReference type="NCBI Taxonomy" id="292414"/>
    <lineage>
        <taxon>Bacteria</taxon>
        <taxon>Pseudomonadati</taxon>
        <taxon>Pseudomonadota</taxon>
        <taxon>Alphaproteobacteria</taxon>
        <taxon>Rhodobacterales</taxon>
        <taxon>Roseobacteraceae</taxon>
        <taxon>Ruegeria</taxon>
    </lineage>
</organism>
<keyword id="KW-0413">Isomerase</keyword>
<keyword id="KW-0663">Pyridoxal phosphate</keyword>
<keyword id="KW-1185">Reference proteome</keyword>
<accession>Q1GFQ4</accession>
<proteinExistence type="inferred from homology"/>